<comment type="function">
    <text evidence="1">Involved in aging, oxidative stress response, and in the regulation of mitochondrial biogenesis. Inactivation of UTH1 increases life span, leads to higher resistance to heat stress and to hydrogen peroxide, and increases sensitivity to the superoxide radical-generating drug paraquat and to copper. Also required for the selective autophagic degradation of mitochondria (mitophagy) in response to nitrogen starvation. May play a role in cell wall morphogenesis and septation. Involved in the remodeling of the cell wall during the various phases of yeast culture development and under various environmental conditions and plays a role in septation. Involved in cell sensitivity to boric acid (By similarity).</text>
</comment>
<comment type="subcellular location">
    <subcellularLocation>
        <location evidence="2">Mitochondrion outer membrane</location>
        <topology evidence="2">Peripheral membrane protein</topology>
    </subcellularLocation>
    <subcellularLocation>
        <location evidence="2">Secreted</location>
        <location evidence="2">Cell wall</location>
    </subcellularLocation>
    <text evidence="2">Non-covalently bound to the cell wall.</text>
</comment>
<comment type="similarity">
    <text evidence="4">Belongs to the SUN family.</text>
</comment>
<comment type="sequence caution" evidence="4">
    <conflict type="erroneous initiation">
        <sequence resource="EMBL-CDS" id="EDZ70864"/>
    </conflict>
    <text>Extended N-terminus.</text>
</comment>
<proteinExistence type="inferred from homology"/>
<organism>
    <name type="scientific">Saccharomyces cerevisiae (strain AWRI1631)</name>
    <name type="common">Baker's yeast</name>
    <dbReference type="NCBI Taxonomy" id="545124"/>
    <lineage>
        <taxon>Eukaryota</taxon>
        <taxon>Fungi</taxon>
        <taxon>Dikarya</taxon>
        <taxon>Ascomycota</taxon>
        <taxon>Saccharomycotina</taxon>
        <taxon>Saccharomycetes</taxon>
        <taxon>Saccharomycetales</taxon>
        <taxon>Saccharomycetaceae</taxon>
        <taxon>Saccharomyces</taxon>
    </lineage>
</organism>
<sequence length="362" mass="36737">MKLSALLALSASTAVLAAPAVHHSDNHHHNDKRAVVTVTQYVNADGTVVIPAANTATSAAADGKVESVAAATTTLSSTAAAATTSAAASSSSSSSSSSSSVGSGDFEDGTISCSDFPSGQGAVSLDWLGLGGWASIMDMNGNTATSCQDGYYCSYACSPGYAKTQWPSEQPSDGRSVGGLYCKNGKLYRSNTDTNSLCVEGQGSAQAVNKVSGSIAICGTDYPGSENMVVPTVVGAGSSQPINVIKEDSYYQWQGKKTSAQYYVNNAGVSVEDGCIWGTEGSGVGNWAPVVLGAGYTDGITYLSIIPNPNNKEAPNFNIKIVATDGSTVNGACSYENGVYSGSGSDGCTVSVTSGSANFVFY</sequence>
<feature type="signal peptide" evidence="3">
    <location>
        <begin position="1"/>
        <end position="17"/>
    </location>
</feature>
<feature type="chain" id="PRO_0000377652" description="Probable secreted beta-glucosidase UTH1">
    <location>
        <begin position="18"/>
        <end position="362"/>
    </location>
</feature>
<gene>
    <name type="primary">UTH1</name>
    <name type="ORF">AWRI1631_112650</name>
</gene>
<dbReference type="EC" id="3.2.1.-"/>
<dbReference type="EMBL" id="ABSV01001500">
    <property type="protein sequence ID" value="EDZ70864.1"/>
    <property type="status" value="ALT_INIT"/>
    <property type="molecule type" value="Genomic_DNA"/>
</dbReference>
<dbReference type="OrthoDB" id="36584at4893"/>
<dbReference type="Proteomes" id="UP000008988">
    <property type="component" value="Unassembled WGS sequence"/>
</dbReference>
<dbReference type="GO" id="GO:0009986">
    <property type="term" value="C:cell surface"/>
    <property type="evidence" value="ECO:0007669"/>
    <property type="project" value="TreeGrafter"/>
</dbReference>
<dbReference type="GO" id="GO:0005576">
    <property type="term" value="C:extracellular region"/>
    <property type="evidence" value="ECO:0007669"/>
    <property type="project" value="UniProtKB-KW"/>
</dbReference>
<dbReference type="GO" id="GO:0009277">
    <property type="term" value="C:fungal-type cell wall"/>
    <property type="evidence" value="ECO:0007669"/>
    <property type="project" value="TreeGrafter"/>
</dbReference>
<dbReference type="GO" id="GO:0005741">
    <property type="term" value="C:mitochondrial outer membrane"/>
    <property type="evidence" value="ECO:0007669"/>
    <property type="project" value="UniProtKB-SubCell"/>
</dbReference>
<dbReference type="GO" id="GO:0016798">
    <property type="term" value="F:hydrolase activity, acting on glycosyl bonds"/>
    <property type="evidence" value="ECO:0007669"/>
    <property type="project" value="UniProtKB-KW"/>
</dbReference>
<dbReference type="GO" id="GO:0006914">
    <property type="term" value="P:autophagy"/>
    <property type="evidence" value="ECO:0007669"/>
    <property type="project" value="UniProtKB-KW"/>
</dbReference>
<dbReference type="GO" id="GO:0000917">
    <property type="term" value="P:division septum assembly"/>
    <property type="evidence" value="ECO:0007669"/>
    <property type="project" value="UniProtKB-KW"/>
</dbReference>
<dbReference type="GO" id="GO:0031505">
    <property type="term" value="P:fungal-type cell wall organization"/>
    <property type="evidence" value="ECO:0007669"/>
    <property type="project" value="TreeGrafter"/>
</dbReference>
<dbReference type="GO" id="GO:0000272">
    <property type="term" value="P:polysaccharide catabolic process"/>
    <property type="evidence" value="ECO:0007669"/>
    <property type="project" value="UniProtKB-KW"/>
</dbReference>
<dbReference type="InterPro" id="IPR051526">
    <property type="entry name" value="Beta-Glucosidase_SUN"/>
</dbReference>
<dbReference type="InterPro" id="IPR005556">
    <property type="entry name" value="SUN"/>
</dbReference>
<dbReference type="PANTHER" id="PTHR31316">
    <property type="entry name" value="BETA-GLUCOSIDASE-LIKE PROTEIN NCA3, MITOCHONDRIAL-RELATED"/>
    <property type="match status" value="1"/>
</dbReference>
<dbReference type="PANTHER" id="PTHR31316:SF2">
    <property type="entry name" value="BETA-GLUCOSIDASE-LIKE PROTEIN NCA3, MITOCHONDRIAL-RELATED"/>
    <property type="match status" value="1"/>
</dbReference>
<dbReference type="Pfam" id="PF03856">
    <property type="entry name" value="SUN"/>
    <property type="match status" value="1"/>
</dbReference>
<name>UTH1_YEAS6</name>
<reference key="1">
    <citation type="journal article" date="2008" name="FEMS Yeast Res.">
        <title>Comparative genome analysis of a Saccharomyces cerevisiae wine strain.</title>
        <authorList>
            <person name="Borneman A.R."/>
            <person name="Forgan A.H."/>
            <person name="Pretorius I.S."/>
            <person name="Chambers P.J."/>
        </authorList>
    </citation>
    <scope>NUCLEOTIDE SEQUENCE [LARGE SCALE GENOMIC DNA]</scope>
    <source>
        <strain>AWRI1631</strain>
    </source>
</reference>
<protein>
    <recommendedName>
        <fullName>Probable secreted beta-glucosidase UTH1</fullName>
        <ecNumber>3.2.1.-</ecNumber>
    </recommendedName>
    <alternativeName>
        <fullName>Youth protein 1</fullName>
    </alternativeName>
</protein>
<evidence type="ECO:0000250" key="1"/>
<evidence type="ECO:0000250" key="2">
    <source>
        <dbReference type="UniProtKB" id="P36135"/>
    </source>
</evidence>
<evidence type="ECO:0000255" key="3"/>
<evidence type="ECO:0000305" key="4"/>
<accession>B5VMJ0</accession>
<keyword id="KW-0072">Autophagy</keyword>
<keyword id="KW-0119">Carbohydrate metabolism</keyword>
<keyword id="KW-0131">Cell cycle</keyword>
<keyword id="KW-0132">Cell division</keyword>
<keyword id="KW-0134">Cell wall</keyword>
<keyword id="KW-0961">Cell wall biogenesis/degradation</keyword>
<keyword id="KW-0326">Glycosidase</keyword>
<keyword id="KW-0378">Hydrolase</keyword>
<keyword id="KW-0472">Membrane</keyword>
<keyword id="KW-0496">Mitochondrion</keyword>
<keyword id="KW-1000">Mitochondrion outer membrane</keyword>
<keyword id="KW-0624">Polysaccharide degradation</keyword>
<keyword id="KW-0964">Secreted</keyword>
<keyword id="KW-0717">Septation</keyword>
<keyword id="KW-0732">Signal</keyword>
<keyword id="KW-0346">Stress response</keyword>